<dbReference type="EMBL" id="AC013428">
    <property type="protein sequence ID" value="AAF76354.1"/>
    <property type="molecule type" value="Genomic_DNA"/>
</dbReference>
<dbReference type="EMBL" id="CP002686">
    <property type="protein sequence ID" value="AEE74920.1"/>
    <property type="molecule type" value="Genomic_DNA"/>
</dbReference>
<dbReference type="EMBL" id="AK118323">
    <property type="protein sequence ID" value="BAC42937.1"/>
    <property type="molecule type" value="mRNA"/>
</dbReference>
<dbReference type="EMBL" id="BT024579">
    <property type="protein sequence ID" value="ABD38918.1"/>
    <property type="molecule type" value="mRNA"/>
</dbReference>
<dbReference type="EMBL" id="AY086115">
    <property type="protein sequence ID" value="AAM63322.1"/>
    <property type="molecule type" value="mRNA"/>
</dbReference>
<dbReference type="RefSeq" id="NP_566377.1">
    <property type="nucleotide sequence ID" value="NM_111888.3"/>
</dbReference>
<dbReference type="BioGRID" id="5551">
    <property type="interactions" value="10"/>
</dbReference>
<dbReference type="FunCoup" id="Q9LPP4">
    <property type="interactions" value="7"/>
</dbReference>
<dbReference type="IntAct" id="Q9LPP4">
    <property type="interactions" value="9"/>
</dbReference>
<dbReference type="STRING" id="3702.Q9LPP4"/>
<dbReference type="iPTMnet" id="Q9LPP4"/>
<dbReference type="PaxDb" id="3702-AT3G10525.1"/>
<dbReference type="EnsemblPlants" id="AT3G10525.1">
    <property type="protein sequence ID" value="AT3G10525.1"/>
    <property type="gene ID" value="AT3G10525"/>
</dbReference>
<dbReference type="GeneID" id="820217"/>
<dbReference type="Gramene" id="AT3G10525.1">
    <property type="protein sequence ID" value="AT3G10525.1"/>
    <property type="gene ID" value="AT3G10525"/>
</dbReference>
<dbReference type="KEGG" id="ath:AT3G10525"/>
<dbReference type="Araport" id="AT3G10525"/>
<dbReference type="TAIR" id="AT3G10525">
    <property type="gene designation" value="LGO"/>
</dbReference>
<dbReference type="HOGENOM" id="CLU_130615_0_0_1"/>
<dbReference type="InParanoid" id="Q9LPP4"/>
<dbReference type="OMA" id="IIMNREE"/>
<dbReference type="PhylomeDB" id="Q9LPP4"/>
<dbReference type="PRO" id="PR:Q9LPP4"/>
<dbReference type="Proteomes" id="UP000006548">
    <property type="component" value="Chromosome 3"/>
</dbReference>
<dbReference type="ExpressionAtlas" id="Q9LPP4">
    <property type="expression patterns" value="baseline and differential"/>
</dbReference>
<dbReference type="GO" id="GO:0005634">
    <property type="term" value="C:nucleus"/>
    <property type="evidence" value="ECO:0000314"/>
    <property type="project" value="UniProtKB"/>
</dbReference>
<dbReference type="GO" id="GO:0004860">
    <property type="term" value="F:protein kinase inhibitor activity"/>
    <property type="evidence" value="ECO:0007669"/>
    <property type="project" value="UniProtKB-KW"/>
</dbReference>
<dbReference type="GO" id="GO:0042742">
    <property type="term" value="P:defense response to bacterium"/>
    <property type="evidence" value="ECO:0000315"/>
    <property type="project" value="TAIR"/>
</dbReference>
<dbReference type="GO" id="GO:0032877">
    <property type="term" value="P:positive regulation of DNA endoreduplication"/>
    <property type="evidence" value="ECO:0000315"/>
    <property type="project" value="TAIR"/>
</dbReference>
<dbReference type="GO" id="GO:0090393">
    <property type="term" value="P:sepal giant cell development"/>
    <property type="evidence" value="ECO:0000315"/>
    <property type="project" value="TAIR"/>
</dbReference>
<dbReference type="InterPro" id="IPR040389">
    <property type="entry name" value="SMR"/>
</dbReference>
<dbReference type="PANTHER" id="PTHR33142:SF13">
    <property type="entry name" value="CYCLIN-DEPENDENT PROTEIN KINASE INHIBITOR SMR1"/>
    <property type="match status" value="1"/>
</dbReference>
<dbReference type="PANTHER" id="PTHR33142">
    <property type="entry name" value="CYCLIN-DEPENDENT PROTEIN KINASE INHIBITOR SMR13"/>
    <property type="match status" value="1"/>
</dbReference>
<organism>
    <name type="scientific">Arabidopsis thaliana</name>
    <name type="common">Mouse-ear cress</name>
    <dbReference type="NCBI Taxonomy" id="3702"/>
    <lineage>
        <taxon>Eukaryota</taxon>
        <taxon>Viridiplantae</taxon>
        <taxon>Streptophyta</taxon>
        <taxon>Embryophyta</taxon>
        <taxon>Tracheophyta</taxon>
        <taxon>Spermatophyta</taxon>
        <taxon>Magnoliopsida</taxon>
        <taxon>eudicotyledons</taxon>
        <taxon>Gunneridae</taxon>
        <taxon>Pentapetalae</taxon>
        <taxon>rosids</taxon>
        <taxon>malvids</taxon>
        <taxon>Brassicales</taxon>
        <taxon>Brassicaceae</taxon>
        <taxon>Camelineae</taxon>
        <taxon>Arabidopsis</taxon>
    </lineage>
</organism>
<evidence type="ECO:0000256" key="1">
    <source>
        <dbReference type="SAM" id="MobiDB-lite"/>
    </source>
</evidence>
<evidence type="ECO:0000269" key="2">
    <source>
    </source>
</evidence>
<evidence type="ECO:0000269" key="3">
    <source>
    </source>
</evidence>
<evidence type="ECO:0000269" key="4">
    <source>
    </source>
</evidence>
<evidence type="ECO:0000269" key="5">
    <source>
    </source>
</evidence>
<evidence type="ECO:0000269" key="6">
    <source>
    </source>
</evidence>
<evidence type="ECO:0000269" key="7">
    <source>
    </source>
</evidence>
<evidence type="ECO:0000269" key="8">
    <source>
    </source>
</evidence>
<evidence type="ECO:0000269" key="9">
    <source>
    </source>
</evidence>
<evidence type="ECO:0000303" key="10">
    <source>
    </source>
</evidence>
<evidence type="ECO:0000303" key="11">
    <source>
    </source>
</evidence>
<evidence type="ECO:0000305" key="12"/>
<evidence type="ECO:0000305" key="13">
    <source>
    </source>
</evidence>
<evidence type="ECO:0000305" key="14">
    <source>
    </source>
</evidence>
<comment type="function">
    <text evidence="4 8 9 13">Probable cyclin-dependent protein kinase (CDK) inhibitor that functions as a repressor of mitosis in the endoreduplication cell cycle (PubMed:17098811, PubMed:26546445). Cooperates with SIM and SMR2 to promote endoreplication during leaf development (PubMed:26546445). Specifically regulates endoreduplication in epidermal pavement cells to produce the cell size pattern (PubMed:20485493). Is necessary for giant cell formation (PubMed:20485493). Positive regulator of effector-triggered immunity (ETI) (PubMed:25455564).</text>
</comment>
<comment type="subunit">
    <text evidence="5 8">Interacts with CDKB1-1 (PubMed:20706207). Interacts with CPR5 (PubMed:25455564).</text>
</comment>
<comment type="subcellular location">
    <subcellularLocation>
        <location evidence="2">Nucleus</location>
    </subcellularLocation>
</comment>
<comment type="tissue specificity">
    <text evidence="2 7">Expressed in roots, leaves, stems, siliques and flowers (PubMed:17098811). Expressed in the root elongation zone (PubMed:24399300).</text>
</comment>
<comment type="induction">
    <text evidence="3 6">Up-regulated by double-stranded DNA breaks-inducing treatments (PubMed:17227549). Up-regulated by zeocin treatment (PubMed:21613568).</text>
</comment>
<comment type="disruption phenotype">
    <text evidence="4">Increased number of smaller cells and loss of giant cells in sepals due to both a decrease in endoreduplication and an average decrease in the duration of the cell cycle.</text>
</comment>
<comment type="miscellaneous">
    <text evidence="14">Over-expression of SMR1 produces additional giant cells on sepals.</text>
</comment>
<reference key="1">
    <citation type="journal article" date="2000" name="Nature">
        <title>Sequence and analysis of chromosome 3 of the plant Arabidopsis thaliana.</title>
        <authorList>
            <person name="Salanoubat M."/>
            <person name="Lemcke K."/>
            <person name="Rieger M."/>
            <person name="Ansorge W."/>
            <person name="Unseld M."/>
            <person name="Fartmann B."/>
            <person name="Valle G."/>
            <person name="Bloecker H."/>
            <person name="Perez-Alonso M."/>
            <person name="Obermaier B."/>
            <person name="Delseny M."/>
            <person name="Boutry M."/>
            <person name="Grivell L.A."/>
            <person name="Mache R."/>
            <person name="Puigdomenech P."/>
            <person name="De Simone V."/>
            <person name="Choisne N."/>
            <person name="Artiguenave F."/>
            <person name="Robert C."/>
            <person name="Brottier P."/>
            <person name="Wincker P."/>
            <person name="Cattolico L."/>
            <person name="Weissenbach J."/>
            <person name="Saurin W."/>
            <person name="Quetier F."/>
            <person name="Schaefer M."/>
            <person name="Mueller-Auer S."/>
            <person name="Gabel C."/>
            <person name="Fuchs M."/>
            <person name="Benes V."/>
            <person name="Wurmbach E."/>
            <person name="Drzonek H."/>
            <person name="Erfle H."/>
            <person name="Jordan N."/>
            <person name="Bangert S."/>
            <person name="Wiedelmann R."/>
            <person name="Kranz H."/>
            <person name="Voss H."/>
            <person name="Holland R."/>
            <person name="Brandt P."/>
            <person name="Nyakatura G."/>
            <person name="Vezzi A."/>
            <person name="D'Angelo M."/>
            <person name="Pallavicini A."/>
            <person name="Toppo S."/>
            <person name="Simionati B."/>
            <person name="Conrad A."/>
            <person name="Hornischer K."/>
            <person name="Kauer G."/>
            <person name="Loehnert T.-H."/>
            <person name="Nordsiek G."/>
            <person name="Reichelt J."/>
            <person name="Scharfe M."/>
            <person name="Schoen O."/>
            <person name="Bargues M."/>
            <person name="Terol J."/>
            <person name="Climent J."/>
            <person name="Navarro P."/>
            <person name="Collado C."/>
            <person name="Perez-Perez A."/>
            <person name="Ottenwaelder B."/>
            <person name="Duchemin D."/>
            <person name="Cooke R."/>
            <person name="Laudie M."/>
            <person name="Berger-Llauro C."/>
            <person name="Purnelle B."/>
            <person name="Masuy D."/>
            <person name="de Haan M."/>
            <person name="Maarse A.C."/>
            <person name="Alcaraz J.-P."/>
            <person name="Cottet A."/>
            <person name="Casacuberta E."/>
            <person name="Monfort A."/>
            <person name="Argiriou A."/>
            <person name="Flores M."/>
            <person name="Liguori R."/>
            <person name="Vitale D."/>
            <person name="Mannhaupt G."/>
            <person name="Haase D."/>
            <person name="Schoof H."/>
            <person name="Rudd S."/>
            <person name="Zaccaria P."/>
            <person name="Mewes H.-W."/>
            <person name="Mayer K.F.X."/>
            <person name="Kaul S."/>
            <person name="Town C.D."/>
            <person name="Koo H.L."/>
            <person name="Tallon L.J."/>
            <person name="Jenkins J."/>
            <person name="Rooney T."/>
            <person name="Rizzo M."/>
            <person name="Walts A."/>
            <person name="Utterback T."/>
            <person name="Fujii C.Y."/>
            <person name="Shea T.P."/>
            <person name="Creasy T.H."/>
            <person name="Haas B."/>
            <person name="Maiti R."/>
            <person name="Wu D."/>
            <person name="Peterson J."/>
            <person name="Van Aken S."/>
            <person name="Pai G."/>
            <person name="Militscher J."/>
            <person name="Sellers P."/>
            <person name="Gill J.E."/>
            <person name="Feldblyum T.V."/>
            <person name="Preuss D."/>
            <person name="Lin X."/>
            <person name="Nierman W.C."/>
            <person name="Salzberg S.L."/>
            <person name="White O."/>
            <person name="Venter J.C."/>
            <person name="Fraser C.M."/>
            <person name="Kaneko T."/>
            <person name="Nakamura Y."/>
            <person name="Sato S."/>
            <person name="Kato T."/>
            <person name="Asamizu E."/>
            <person name="Sasamoto S."/>
            <person name="Kimura T."/>
            <person name="Idesawa K."/>
            <person name="Kawashima K."/>
            <person name="Kishida Y."/>
            <person name="Kiyokawa C."/>
            <person name="Kohara M."/>
            <person name="Matsumoto M."/>
            <person name="Matsuno A."/>
            <person name="Muraki A."/>
            <person name="Nakayama S."/>
            <person name="Nakazaki N."/>
            <person name="Shinpo S."/>
            <person name="Takeuchi C."/>
            <person name="Wada T."/>
            <person name="Watanabe A."/>
            <person name="Yamada M."/>
            <person name="Yasuda M."/>
            <person name="Tabata S."/>
        </authorList>
    </citation>
    <scope>NUCLEOTIDE SEQUENCE [LARGE SCALE GENOMIC DNA]</scope>
    <source>
        <strain>cv. Columbia</strain>
    </source>
</reference>
<reference key="2">
    <citation type="journal article" date="2017" name="Plant J.">
        <title>Araport11: a complete reannotation of the Arabidopsis thaliana reference genome.</title>
        <authorList>
            <person name="Cheng C.Y."/>
            <person name="Krishnakumar V."/>
            <person name="Chan A.P."/>
            <person name="Thibaud-Nissen F."/>
            <person name="Schobel S."/>
            <person name="Town C.D."/>
        </authorList>
    </citation>
    <scope>GENOME REANNOTATION</scope>
    <source>
        <strain>cv. Columbia</strain>
    </source>
</reference>
<reference key="3">
    <citation type="journal article" date="2002" name="Science">
        <title>Functional annotation of a full-length Arabidopsis cDNA collection.</title>
        <authorList>
            <person name="Seki M."/>
            <person name="Narusaka M."/>
            <person name="Kamiya A."/>
            <person name="Ishida J."/>
            <person name="Satou M."/>
            <person name="Sakurai T."/>
            <person name="Nakajima M."/>
            <person name="Enju A."/>
            <person name="Akiyama K."/>
            <person name="Oono Y."/>
            <person name="Muramatsu M."/>
            <person name="Hayashizaki Y."/>
            <person name="Kawai J."/>
            <person name="Carninci P."/>
            <person name="Itoh M."/>
            <person name="Ishii Y."/>
            <person name="Arakawa T."/>
            <person name="Shibata K."/>
            <person name="Shinagawa A."/>
            <person name="Shinozaki K."/>
        </authorList>
    </citation>
    <scope>NUCLEOTIDE SEQUENCE [LARGE SCALE MRNA]</scope>
    <source>
        <strain>cv. Columbia</strain>
    </source>
</reference>
<reference key="4">
    <citation type="submission" date="2006-02" db="EMBL/GenBank/DDBJ databases">
        <title>Arabidopsis ORF clones.</title>
        <authorList>
            <person name="Shinn P."/>
            <person name="Chen H."/>
            <person name="Kim C.J."/>
            <person name="Ecker J.R."/>
        </authorList>
    </citation>
    <scope>NUCLEOTIDE SEQUENCE [MRNA]</scope>
    <source>
        <strain>cv. Columbia</strain>
    </source>
</reference>
<reference key="5">
    <citation type="submission" date="2002-03" db="EMBL/GenBank/DDBJ databases">
        <title>Full-length cDNA from Arabidopsis thaliana.</title>
        <authorList>
            <person name="Brover V.V."/>
            <person name="Troukhan M.E."/>
            <person name="Alexandrov N.A."/>
            <person name="Lu Y.-P."/>
            <person name="Flavell R.B."/>
            <person name="Feldmann K.A."/>
        </authorList>
    </citation>
    <scope>NUCLEOTIDE SEQUENCE [LARGE SCALE MRNA]</scope>
</reference>
<reference key="6">
    <citation type="journal article" date="2006" name="Plant Cell">
        <title>SIAMESE, a plant-specific cell cycle regulator, controls endoreplication onset in Arabidopsis thaliana.</title>
        <authorList>
            <person name="Churchman M.L."/>
            <person name="Brown M.L."/>
            <person name="Kato N."/>
            <person name="Kirik V."/>
            <person name="Huelskamp M."/>
            <person name="Inze D."/>
            <person name="De Veylder L."/>
            <person name="Walker J.D."/>
            <person name="Zheng Z."/>
            <person name="Oppenheimer D.G."/>
            <person name="Gwin T."/>
            <person name="Churchman J."/>
            <person name="Larkin J.C."/>
        </authorList>
    </citation>
    <scope>FUNCTION</scope>
    <scope>SUBCELLULAR LOCATION</scope>
    <scope>TISSUE SPECIFICITY</scope>
</reference>
<reference key="7">
    <citation type="journal article" date="2006" name="Plant J.">
        <title>ATR and ATM play both distinct and additive roles in response to ionizing radiation.</title>
        <authorList>
            <person name="Culligan K.M."/>
            <person name="Robertson C.E."/>
            <person name="Foreman J."/>
            <person name="Doerner P."/>
            <person name="Britt A.B."/>
        </authorList>
    </citation>
    <scope>INDUCTION BY DOUBLE-STRANDED DNA BREAKS-INDUCING TREATMENTS</scope>
</reference>
<reference key="8">
    <citation type="journal article" date="2010" name="Mol. Syst. Biol.">
        <title>Targeted interactomics reveals a complex core cell cycle machinery in Arabidopsis thaliana.</title>
        <authorList>
            <person name="Van Leene J."/>
            <person name="Hollunder J."/>
            <person name="Eeckhout D."/>
            <person name="Persiau G."/>
            <person name="Van De Slijke E."/>
            <person name="Stals H."/>
            <person name="Van Isterdael G."/>
            <person name="Verkest A."/>
            <person name="Neirynck S."/>
            <person name="Buffel Y."/>
            <person name="De Bodt S."/>
            <person name="Maere S."/>
            <person name="Laukens K."/>
            <person name="Pharazyn A."/>
            <person name="Ferreira P.C.G."/>
            <person name="Eloy N."/>
            <person name="Renne C."/>
            <person name="Meyer C."/>
            <person name="Faure J.-D."/>
            <person name="Steinbrenner J."/>
            <person name="Beynon J."/>
            <person name="Larkin J.C."/>
            <person name="Van de Peer Y."/>
            <person name="Hilson P."/>
            <person name="Kuiper M."/>
            <person name="De Veylder L."/>
            <person name="Van Onckelen H."/>
            <person name="Inze D."/>
            <person name="Witters E."/>
            <person name="De Jaeger G."/>
        </authorList>
    </citation>
    <scope>INTERACTION WITH CDKB1-1</scope>
</reference>
<reference key="9">
    <citation type="journal article" date="2010" name="PLoS Biol.">
        <title>Variability in the control of cell division underlies sepal epidermal patterning in Arabidopsis thaliana.</title>
        <authorList>
            <person name="Roeder A.H."/>
            <person name="Chickarmane V."/>
            <person name="Cunha A."/>
            <person name="Obara B."/>
            <person name="Manjunath B.S."/>
            <person name="Meyerowitz E.M."/>
        </authorList>
    </citation>
    <scope>FUNCTION</scope>
    <scope>MUTAGENESIS OF PRO-62</scope>
    <scope>DISRUPTION PHENOTYPE</scope>
</reference>
<reference key="10">
    <citation type="journal article" date="2011" name="Proc. Natl. Acad. Sci. U.S.A.">
        <title>Programmed induction of endoreduplication by DNA double-strand breaks in Arabidopsis.</title>
        <authorList>
            <person name="Adachi S."/>
            <person name="Minamisawa K."/>
            <person name="Okushima Y."/>
            <person name="Inagaki S."/>
            <person name="Yoshiyama K."/>
            <person name="Kondou Y."/>
            <person name="Kaminuma E."/>
            <person name="Kawashima M."/>
            <person name="Toyoda T."/>
            <person name="Matsui M."/>
            <person name="Kurihara D."/>
            <person name="Matsunaga S."/>
            <person name="Umeda M."/>
        </authorList>
    </citation>
    <scope>INDUCTION BY ZEOCIN</scope>
</reference>
<reference key="11">
    <citation type="journal article" date="2014" name="Cell Host Microbe">
        <title>A noncanonical role for the CKI-RB-E2F cell-cycle signaling pathway in plant effector-triggered immunity.</title>
        <authorList>
            <person name="Wang S."/>
            <person name="Gu Y."/>
            <person name="Zebell S.G."/>
            <person name="Anderson L.K."/>
            <person name="Wang W."/>
            <person name="Mohan R."/>
            <person name="Dong X."/>
        </authorList>
    </citation>
    <scope>FUNCTION</scope>
    <scope>INTERACTION WITH CPR5</scope>
</reference>
<reference key="12">
    <citation type="journal article" date="2014" name="Plant Cell">
        <title>The Arabidopsis SIAMESE-RELATED cyclin-dependent kinase inhibitors SMR5 and SMR7 regulate the DNA damage checkpoint in response to reactive oxygen species.</title>
        <authorList>
            <person name="Yi D."/>
            <person name="Alvim Kamei C.L."/>
            <person name="Cools T."/>
            <person name="Vanderauwera S."/>
            <person name="Takahashi N."/>
            <person name="Okushima Y."/>
            <person name="Eekhout T."/>
            <person name="Yoshiyama K.O."/>
            <person name="Larkin J."/>
            <person name="Van den Daele H."/>
            <person name="Conklin P."/>
            <person name="Britt A."/>
            <person name="Umeda M."/>
            <person name="De Veylder L."/>
        </authorList>
    </citation>
    <scope>TISSUE SPECIFICITY</scope>
    <scope>GENE FAMILY</scope>
    <scope>NOMENCLATURE</scope>
</reference>
<reference key="13">
    <citation type="journal article" date="2015" name="Plant Cell">
        <title>Functional conservation in the SIAMESE-RELATED family of cyclin-dependent kinase inhibitors in land plants.</title>
        <authorList>
            <person name="Kumar N."/>
            <person name="Harashima H."/>
            <person name="Kalve S."/>
            <person name="Bramsiepe J."/>
            <person name="Wang K."/>
            <person name="Sizani B.L."/>
            <person name="Bertrand L.L."/>
            <person name="Johnson M.C."/>
            <person name="Faulk C."/>
            <person name="Dale R."/>
            <person name="Simmons L.A."/>
            <person name="Churchman M.L."/>
            <person name="Sugimoto K."/>
            <person name="Kato N."/>
            <person name="Dasanayake M."/>
            <person name="Beemster G."/>
            <person name="Schnittger A."/>
            <person name="Larkin J.C."/>
        </authorList>
    </citation>
    <scope>FUNCTION</scope>
    <scope>GENE FAMILY</scope>
    <scope>NOMENCLATURE</scope>
</reference>
<name>SMR1_ARATH</name>
<sequence>MDLELLQDLSKFNFPTPIKIRSKTSKTKKDEGDDDEDDLRCSTPTSQEHKIPAVVDSPPPPPRKPRPPPSAPSATAALMIRSCKRKLLVSTCEIIMNREEIDRFFSSVYNETSTTAKRRRSYPYCSRR</sequence>
<feature type="chain" id="PRO_0000418064" description="Cyclin-dependent protein kinase inhibitor SMR1">
    <location>
        <begin position="1"/>
        <end position="128"/>
    </location>
</feature>
<feature type="region of interest" description="Disordered" evidence="1">
    <location>
        <begin position="17"/>
        <end position="74"/>
    </location>
</feature>
<feature type="compositionally biased region" description="Pro residues" evidence="1">
    <location>
        <begin position="57"/>
        <end position="71"/>
    </location>
</feature>
<feature type="mutagenesis site" description="In lgo-1; loss of giant cells in sepals." evidence="4">
    <original>P</original>
    <variation>S</variation>
    <location>
        <position position="62"/>
    </location>
</feature>
<feature type="sequence conflict" description="In Ref. 5; AAM63322." evidence="12" ref="5">
    <original>R</original>
    <variation>S</variation>
    <location>
        <position position="40"/>
    </location>
</feature>
<feature type="sequence conflict" description="In Ref. 3; BAC42937." evidence="12" ref="3">
    <original>V</original>
    <variation>A</variation>
    <location>
        <position position="54"/>
    </location>
</feature>
<feature type="sequence conflict" description="In Ref. 5; AAM63322." evidence="12" ref="5">
    <original>V</original>
    <variation>I</variation>
    <location>
        <position position="55"/>
    </location>
</feature>
<proteinExistence type="evidence at protein level"/>
<accession>Q9LPP4</accession>
<accession>Q8GXB8</accession>
<accession>Q8LDA2</accession>
<protein>
    <recommendedName>
        <fullName evidence="10 11">Cyclin-dependent protein kinase inhibitor SMR1</fullName>
    </recommendedName>
    <alternativeName>
        <fullName>Protein LOSS OF GIANT CELLS FROM ORGANS</fullName>
    </alternativeName>
    <alternativeName>
        <fullName evidence="10 11">Protein SIAMESE-RELATED 1</fullName>
    </alternativeName>
</protein>
<keyword id="KW-0131">Cell cycle</keyword>
<keyword id="KW-0539">Nucleus</keyword>
<keyword id="KW-0649">Protein kinase inhibitor</keyword>
<keyword id="KW-1185">Reference proteome</keyword>
<gene>
    <name evidence="10 11" type="primary">SMR1</name>
    <name type="synonym">LGO</name>
    <name type="ordered locus">At3g10525</name>
    <name type="ORF">F13M14.31</name>
    <name type="ORF">F18K10.10</name>
</gene>